<reference key="1">
    <citation type="journal article" date="2009" name="Toxicon">
        <title>Island specific expression of a novel [Lys(49)]phospholipase A(2) (BPIII) in Protobothrops flavoviridis venom in Amami-Oshima, Japan.</title>
        <authorList>
            <person name="Murakami T."/>
            <person name="Kariu T."/>
            <person name="Takazaki S."/>
            <person name="Hattori S."/>
            <person name="Chijiwa T."/>
            <person name="Ohno M."/>
            <person name="Oda-Ueda N."/>
        </authorList>
    </citation>
    <scope>NUCLEOTIDE SEQUENCE [MRNA]</scope>
    <scope>PROTEIN SEQUENCE OF 88-100</scope>
    <scope>FUNCTION</scope>
    <scope>IDENTIFICATION BY MASS SPECTROMETRY</scope>
    <source>
        <strain>Amami-Oshima</strain>
        <tissue>Venom</tissue>
        <tissue>Venom gland</tissue>
    </source>
</reference>
<reference key="2">
    <citation type="journal article" date="2010" name="Toxicon">
        <authorList>
            <person name="Murakami T."/>
            <person name="Kariu T."/>
            <person name="Takazaki S."/>
            <person name="Hattori S."/>
            <person name="Chijiwa T."/>
            <person name="Ohno M."/>
            <person name="Oda-Ueda N."/>
        </authorList>
    </citation>
    <scope>ERRATUM OF PUBMED:19463843</scope>
</reference>
<organism>
    <name type="scientific">Protobothrops flavoviridis</name>
    <name type="common">Habu</name>
    <name type="synonym">Trimeresurus flavoviridis</name>
    <dbReference type="NCBI Taxonomy" id="88087"/>
    <lineage>
        <taxon>Eukaryota</taxon>
        <taxon>Metazoa</taxon>
        <taxon>Chordata</taxon>
        <taxon>Craniata</taxon>
        <taxon>Vertebrata</taxon>
        <taxon>Euteleostomi</taxon>
        <taxon>Lepidosauria</taxon>
        <taxon>Squamata</taxon>
        <taxon>Bifurcata</taxon>
        <taxon>Unidentata</taxon>
        <taxon>Episquamata</taxon>
        <taxon>Toxicofera</taxon>
        <taxon>Serpentes</taxon>
        <taxon>Colubroidea</taxon>
        <taxon>Viperidae</taxon>
        <taxon>Crotalinae</taxon>
        <taxon>Protobothrops</taxon>
    </lineage>
</organism>
<protein>
    <recommendedName>
        <fullName>Basic phospholipase A2 BP-III</fullName>
        <shortName>svPLA2</shortName>
        <ecNumber>3.1.1.4</ecNumber>
    </recommendedName>
    <alternativeName>
        <fullName>Basic protein III</fullName>
        <shortName>BPIII</shortName>
    </alternativeName>
    <alternativeName>
        <fullName>Phosphatidylcholine 2-acylhydrolase</fullName>
    </alternativeName>
</protein>
<proteinExistence type="evidence at protein level"/>
<comment type="function">
    <text evidence="1 6">Snake venom phospholipase A2 (PLA2) that has low phospholipase A2 activity (By similarity). Shows anticoagulant activities, strong myolytic activity, infiltration of polymorphonuclear cells, and edema in stromal tissues. Induces cell death of Jurkat cells in a concentration dependent manner. PLA2 catalyzes the calcium-dependent hydrolysis of the 2-acyl groups in 3-sn-phosphoglycerides.</text>
</comment>
<comment type="catalytic activity">
    <reaction evidence="4 5">
        <text>a 1,2-diacyl-sn-glycero-3-phosphocholine + H2O = a 1-acyl-sn-glycero-3-phosphocholine + a fatty acid + H(+)</text>
        <dbReference type="Rhea" id="RHEA:15801"/>
        <dbReference type="ChEBI" id="CHEBI:15377"/>
        <dbReference type="ChEBI" id="CHEBI:15378"/>
        <dbReference type="ChEBI" id="CHEBI:28868"/>
        <dbReference type="ChEBI" id="CHEBI:57643"/>
        <dbReference type="ChEBI" id="CHEBI:58168"/>
        <dbReference type="EC" id="3.1.1.4"/>
    </reaction>
</comment>
<comment type="cofactor">
    <cofactor evidence="1">
        <name>Ca(2+)</name>
        <dbReference type="ChEBI" id="CHEBI:29108"/>
    </cofactor>
    <text evidence="1">Binds 1 Ca(2+) ion.</text>
</comment>
<comment type="subcellular location">
    <subcellularLocation>
        <location>Secreted</location>
    </subcellularLocation>
</comment>
<comment type="tissue specificity">
    <text>Expressed by the venom gland.</text>
</comment>
<comment type="miscellaneous">
    <text evidence="8">Is expressed in Amami-Oshima P.flavoviridis venom, but is missing in Tokunoshima P.flavoviridis venom.</text>
</comment>
<comment type="similarity">
    <text evidence="7">Belongs to the phospholipase A2 family. Group II subfamily. K49 sub-subfamily.</text>
</comment>
<comment type="caution">
    <text evidence="7">Binds calcium very weakly as one of the calcium-binding ligands is lost (Asp-&gt;Lys in position 64, which corresponds to 'Lys-49' in the current nomenclature).</text>
</comment>
<feature type="signal peptide" evidence="3">
    <location>
        <begin position="1"/>
        <end position="16"/>
    </location>
</feature>
<feature type="chain" id="PRO_5000503609" description="Basic phospholipase A2 BP-III">
    <location>
        <begin position="17"/>
        <end position="138"/>
    </location>
</feature>
<feature type="active site" evidence="1">
    <location>
        <position position="63"/>
    </location>
</feature>
<feature type="active site" evidence="1">
    <location>
        <position position="106"/>
    </location>
</feature>
<feature type="binding site" evidence="1">
    <location>
        <position position="45"/>
    </location>
    <ligand>
        <name>Ca(2+)</name>
        <dbReference type="ChEBI" id="CHEBI:29108"/>
    </ligand>
</feature>
<feature type="binding site" evidence="1">
    <location>
        <position position="47"/>
    </location>
    <ligand>
        <name>Ca(2+)</name>
        <dbReference type="ChEBI" id="CHEBI:29108"/>
    </ligand>
</feature>
<feature type="disulfide bond" evidence="2">
    <location>
        <begin position="42"/>
        <end position="132"/>
    </location>
</feature>
<feature type="disulfide bond" evidence="2">
    <location>
        <begin position="44"/>
        <end position="60"/>
    </location>
</feature>
<feature type="disulfide bond" evidence="2">
    <location>
        <begin position="59"/>
        <end position="112"/>
    </location>
</feature>
<feature type="disulfide bond" evidence="2">
    <location>
        <begin position="65"/>
        <end position="138"/>
    </location>
</feature>
<feature type="disulfide bond" evidence="2">
    <location>
        <begin position="66"/>
        <end position="105"/>
    </location>
</feature>
<feature type="disulfide bond" evidence="2">
    <location>
        <begin position="73"/>
        <end position="98"/>
    </location>
</feature>
<feature type="disulfide bond" evidence="2">
    <location>
        <begin position="91"/>
        <end position="103"/>
    </location>
</feature>
<sequence>MRTLWIMAVLLVGVDGSLVQLWKMIFQETGKEAAKNYGLYGCNCGVGRRGKPKDATDSCCYVHKCCYKKVTGCNPKMDSYSYSWKNKAIVCGENNPPCLKQVCECDKAVAICLRENLGTYNKKYTIYPKPFCKKADTC</sequence>
<accession>C7G1G6</accession>
<name>PA2B3_PROFL</name>
<dbReference type="EC" id="3.1.1.4"/>
<dbReference type="EMBL" id="AB470470">
    <property type="protein sequence ID" value="BAH97119.1"/>
    <property type="molecule type" value="mRNA"/>
</dbReference>
<dbReference type="SMR" id="C7G1G6"/>
<dbReference type="GO" id="GO:0005576">
    <property type="term" value="C:extracellular region"/>
    <property type="evidence" value="ECO:0007669"/>
    <property type="project" value="UniProtKB-SubCell"/>
</dbReference>
<dbReference type="GO" id="GO:0005509">
    <property type="term" value="F:calcium ion binding"/>
    <property type="evidence" value="ECO:0007669"/>
    <property type="project" value="InterPro"/>
</dbReference>
<dbReference type="GO" id="GO:0047498">
    <property type="term" value="F:calcium-dependent phospholipase A2 activity"/>
    <property type="evidence" value="ECO:0007669"/>
    <property type="project" value="TreeGrafter"/>
</dbReference>
<dbReference type="GO" id="GO:0005543">
    <property type="term" value="F:phospholipid binding"/>
    <property type="evidence" value="ECO:0007669"/>
    <property type="project" value="TreeGrafter"/>
</dbReference>
<dbReference type="GO" id="GO:0090729">
    <property type="term" value="F:toxin activity"/>
    <property type="evidence" value="ECO:0007669"/>
    <property type="project" value="UniProtKB-KW"/>
</dbReference>
<dbReference type="GO" id="GO:0050482">
    <property type="term" value="P:arachidonate secretion"/>
    <property type="evidence" value="ECO:0007669"/>
    <property type="project" value="InterPro"/>
</dbReference>
<dbReference type="GO" id="GO:0016042">
    <property type="term" value="P:lipid catabolic process"/>
    <property type="evidence" value="ECO:0007669"/>
    <property type="project" value="InterPro"/>
</dbReference>
<dbReference type="GO" id="GO:0042130">
    <property type="term" value="P:negative regulation of T cell proliferation"/>
    <property type="evidence" value="ECO:0007669"/>
    <property type="project" value="TreeGrafter"/>
</dbReference>
<dbReference type="GO" id="GO:0006644">
    <property type="term" value="P:phospholipid metabolic process"/>
    <property type="evidence" value="ECO:0007669"/>
    <property type="project" value="InterPro"/>
</dbReference>
<dbReference type="CDD" id="cd00125">
    <property type="entry name" value="PLA2c"/>
    <property type="match status" value="1"/>
</dbReference>
<dbReference type="FunFam" id="1.20.90.10:FF:000001">
    <property type="entry name" value="Basic phospholipase A2 homolog"/>
    <property type="match status" value="1"/>
</dbReference>
<dbReference type="Gene3D" id="1.20.90.10">
    <property type="entry name" value="Phospholipase A2 domain"/>
    <property type="match status" value="1"/>
</dbReference>
<dbReference type="InterPro" id="IPR001211">
    <property type="entry name" value="PLipase_A2"/>
</dbReference>
<dbReference type="InterPro" id="IPR033112">
    <property type="entry name" value="PLipase_A2_Asp_AS"/>
</dbReference>
<dbReference type="InterPro" id="IPR016090">
    <property type="entry name" value="PLipase_A2_dom"/>
</dbReference>
<dbReference type="InterPro" id="IPR036444">
    <property type="entry name" value="PLipase_A2_dom_sf"/>
</dbReference>
<dbReference type="InterPro" id="IPR033113">
    <property type="entry name" value="PLipase_A2_His_AS"/>
</dbReference>
<dbReference type="PANTHER" id="PTHR11716">
    <property type="entry name" value="PHOSPHOLIPASE A2 FAMILY MEMBER"/>
    <property type="match status" value="1"/>
</dbReference>
<dbReference type="PANTHER" id="PTHR11716:SF9">
    <property type="entry name" value="PHOSPHOLIPASE A2, MEMBRANE ASSOCIATED"/>
    <property type="match status" value="1"/>
</dbReference>
<dbReference type="Pfam" id="PF00068">
    <property type="entry name" value="Phospholip_A2_1"/>
    <property type="match status" value="1"/>
</dbReference>
<dbReference type="PRINTS" id="PR00389">
    <property type="entry name" value="PHPHLIPASEA2"/>
</dbReference>
<dbReference type="SMART" id="SM00085">
    <property type="entry name" value="PA2c"/>
    <property type="match status" value="1"/>
</dbReference>
<dbReference type="SUPFAM" id="SSF48619">
    <property type="entry name" value="Phospholipase A2, PLA2"/>
    <property type="match status" value="1"/>
</dbReference>
<dbReference type="PROSITE" id="PS00119">
    <property type="entry name" value="PA2_ASP"/>
    <property type="match status" value="1"/>
</dbReference>
<dbReference type="PROSITE" id="PS00118">
    <property type="entry name" value="PA2_HIS"/>
    <property type="match status" value="1"/>
</dbReference>
<evidence type="ECO:0000250" key="1"/>
<evidence type="ECO:0000250" key="2">
    <source>
        <dbReference type="UniProtKB" id="Q90249"/>
    </source>
</evidence>
<evidence type="ECO:0000255" key="3"/>
<evidence type="ECO:0000255" key="4">
    <source>
        <dbReference type="PROSITE-ProRule" id="PRU10035"/>
    </source>
</evidence>
<evidence type="ECO:0000255" key="5">
    <source>
        <dbReference type="PROSITE-ProRule" id="PRU10036"/>
    </source>
</evidence>
<evidence type="ECO:0000269" key="6">
    <source>
    </source>
</evidence>
<evidence type="ECO:0000305" key="7"/>
<evidence type="ECO:0000305" key="8">
    <source>
    </source>
</evidence>
<keyword id="KW-1203">Blood coagulation cascade inhibiting toxin</keyword>
<keyword id="KW-0903">Direct protein sequencing</keyword>
<keyword id="KW-1015">Disulfide bond</keyword>
<keyword id="KW-1199">Hemostasis impairing toxin</keyword>
<keyword id="KW-0378">Hydrolase</keyword>
<keyword id="KW-0479">Metal-binding</keyword>
<keyword id="KW-0959">Myotoxin</keyword>
<keyword id="KW-0964">Secreted</keyword>
<keyword id="KW-0732">Signal</keyword>
<keyword id="KW-0800">Toxin</keyword>